<reference key="1">
    <citation type="submission" date="2003-06" db="EMBL/GenBank/DDBJ databases">
        <title>The complete genome sequence of Haemophilus ducreyi.</title>
        <authorList>
            <person name="Munson R.S. Jr."/>
            <person name="Ray W.C."/>
            <person name="Mahairas G."/>
            <person name="Sabo P."/>
            <person name="Mungur R."/>
            <person name="Johnson L."/>
            <person name="Nguyen D."/>
            <person name="Wang J."/>
            <person name="Forst C."/>
            <person name="Hood L."/>
        </authorList>
    </citation>
    <scope>NUCLEOTIDE SEQUENCE [LARGE SCALE GENOMIC DNA]</scope>
    <source>
        <strain>35000HP / ATCC 700724</strain>
    </source>
</reference>
<evidence type="ECO:0000255" key="1">
    <source>
        <dbReference type="HAMAP-Rule" id="MF_01888"/>
    </source>
</evidence>
<evidence type="ECO:0000256" key="2">
    <source>
        <dbReference type="SAM" id="MobiDB-lite"/>
    </source>
</evidence>
<keyword id="KW-0963">Cytoplasm</keyword>
<keyword id="KW-1185">Reference proteome</keyword>
<organism>
    <name type="scientific">Haemophilus ducreyi (strain 35000HP / ATCC 700724)</name>
    <dbReference type="NCBI Taxonomy" id="233412"/>
    <lineage>
        <taxon>Bacteria</taxon>
        <taxon>Pseudomonadati</taxon>
        <taxon>Pseudomonadota</taxon>
        <taxon>Gammaproteobacteria</taxon>
        <taxon>Pasteurellales</taxon>
        <taxon>Pasteurellaceae</taxon>
        <taxon>Haemophilus</taxon>
    </lineage>
</organism>
<comment type="function">
    <text evidence="1">Globally modulates RNA abundance by binding to RNase E (Rne) and regulating its endonucleolytic activity. Can modulate Rne action in a substrate-dependent manner by altering the composition of the degradosome.</text>
</comment>
<comment type="subunit">
    <text evidence="1">Interacts with the C-terminal region of Rne.</text>
</comment>
<comment type="subcellular location">
    <subcellularLocation>
        <location evidence="1">Cytoplasm</location>
    </subcellularLocation>
</comment>
<comment type="similarity">
    <text evidence="1">Belongs to the RraB family.</text>
</comment>
<accession>Q7VNY1</accession>
<dbReference type="EMBL" id="AE017143">
    <property type="protein sequence ID" value="AAP95316.1"/>
    <property type="molecule type" value="Genomic_DNA"/>
</dbReference>
<dbReference type="RefSeq" id="WP_010944369.1">
    <property type="nucleotide sequence ID" value="NC_002940.2"/>
</dbReference>
<dbReference type="SMR" id="Q7VNY1"/>
<dbReference type="STRING" id="233412.HD_0340"/>
<dbReference type="KEGG" id="hdu:HD_0340"/>
<dbReference type="eggNOG" id="COG3076">
    <property type="taxonomic scope" value="Bacteria"/>
</dbReference>
<dbReference type="HOGENOM" id="CLU_128640_0_0_6"/>
<dbReference type="OrthoDB" id="7065464at2"/>
<dbReference type="Proteomes" id="UP000001022">
    <property type="component" value="Chromosome"/>
</dbReference>
<dbReference type="GO" id="GO:0005737">
    <property type="term" value="C:cytoplasm"/>
    <property type="evidence" value="ECO:0007669"/>
    <property type="project" value="UniProtKB-SubCell"/>
</dbReference>
<dbReference type="GO" id="GO:0060698">
    <property type="term" value="F:endoribonuclease inhibitor activity"/>
    <property type="evidence" value="ECO:0007669"/>
    <property type="project" value="UniProtKB-UniRule"/>
</dbReference>
<dbReference type="GO" id="GO:0019899">
    <property type="term" value="F:enzyme binding"/>
    <property type="evidence" value="ECO:0007669"/>
    <property type="project" value="UniProtKB-UniRule"/>
</dbReference>
<dbReference type="Gene3D" id="3.30.70.970">
    <property type="entry name" value="RraB-like"/>
    <property type="match status" value="1"/>
</dbReference>
<dbReference type="HAMAP" id="MF_01888">
    <property type="entry name" value="RraB"/>
    <property type="match status" value="1"/>
</dbReference>
<dbReference type="InterPro" id="IPR016716">
    <property type="entry name" value="RraB"/>
</dbReference>
<dbReference type="InterPro" id="IPR036701">
    <property type="entry name" value="RraB-like_sf"/>
</dbReference>
<dbReference type="InterPro" id="IPR009671">
    <property type="entry name" value="RraB_dom"/>
</dbReference>
<dbReference type="NCBIfam" id="NF008393">
    <property type="entry name" value="PRK11191.1"/>
    <property type="match status" value="1"/>
</dbReference>
<dbReference type="Pfam" id="PF06877">
    <property type="entry name" value="RraB"/>
    <property type="match status" value="1"/>
</dbReference>
<dbReference type="PIRSF" id="PIRSF018193">
    <property type="entry name" value="UCP018193"/>
    <property type="match status" value="1"/>
</dbReference>
<dbReference type="SUPFAM" id="SSF89946">
    <property type="entry name" value="Hypothetical protein VC0424"/>
    <property type="match status" value="1"/>
</dbReference>
<sequence>MYDLTALRQQTDEIIDNLLKDGSDPEALHIIEHHIAHHDFDKLEKLVVDAYKLGYEISEAEEIEDDQGNVLFVCDIVSEVKLNGDIITAQQQELLPLIEKAAAEYEGWGTYFEDPNAEEDEYGDDGEFFDDEDEADFNNAKVH</sequence>
<gene>
    <name evidence="1" type="primary">rraB</name>
    <name type="ordered locus">HD_0340</name>
</gene>
<feature type="chain" id="PRO_0000404307" description="Regulator of ribonuclease activity B">
    <location>
        <begin position="1"/>
        <end position="143"/>
    </location>
</feature>
<feature type="region of interest" description="Disordered" evidence="2">
    <location>
        <begin position="113"/>
        <end position="143"/>
    </location>
</feature>
<feature type="compositionally biased region" description="Acidic residues" evidence="2">
    <location>
        <begin position="115"/>
        <end position="136"/>
    </location>
</feature>
<protein>
    <recommendedName>
        <fullName evidence="1">Regulator of ribonuclease activity B</fullName>
    </recommendedName>
</protein>
<name>RRAB_HAEDU</name>
<proteinExistence type="inferred from homology"/>